<proteinExistence type="inferred from homology"/>
<feature type="chain" id="PRO_0000088219" description="3-phosphoshikimate 1-carboxyvinyltransferase">
    <location>
        <begin position="1"/>
        <end position="429"/>
    </location>
</feature>
<feature type="active site" description="Proton acceptor" evidence="1">
    <location>
        <position position="316"/>
    </location>
</feature>
<feature type="binding site" evidence="1">
    <location>
        <position position="23"/>
    </location>
    <ligand>
        <name>3-phosphoshikimate</name>
        <dbReference type="ChEBI" id="CHEBI:145989"/>
    </ligand>
</feature>
<feature type="binding site" evidence="1">
    <location>
        <position position="23"/>
    </location>
    <ligand>
        <name>phosphoenolpyruvate</name>
        <dbReference type="ChEBI" id="CHEBI:58702"/>
    </ligand>
</feature>
<feature type="binding site" evidence="1">
    <location>
        <position position="24"/>
    </location>
    <ligand>
        <name>3-phosphoshikimate</name>
        <dbReference type="ChEBI" id="CHEBI:145989"/>
    </ligand>
</feature>
<feature type="binding site" evidence="1">
    <location>
        <position position="28"/>
    </location>
    <ligand>
        <name>3-phosphoshikimate</name>
        <dbReference type="ChEBI" id="CHEBI:145989"/>
    </ligand>
</feature>
<feature type="binding site" evidence="1">
    <location>
        <position position="95"/>
    </location>
    <ligand>
        <name>phosphoenolpyruvate</name>
        <dbReference type="ChEBI" id="CHEBI:58702"/>
    </ligand>
</feature>
<feature type="binding site" evidence="1">
    <location>
        <position position="123"/>
    </location>
    <ligand>
        <name>phosphoenolpyruvate</name>
        <dbReference type="ChEBI" id="CHEBI:58702"/>
    </ligand>
</feature>
<feature type="binding site" evidence="1">
    <location>
        <position position="168"/>
    </location>
    <ligand>
        <name>3-phosphoshikimate</name>
        <dbReference type="ChEBI" id="CHEBI:145989"/>
    </ligand>
</feature>
<feature type="binding site" evidence="1">
    <location>
        <position position="170"/>
    </location>
    <ligand>
        <name>3-phosphoshikimate</name>
        <dbReference type="ChEBI" id="CHEBI:145989"/>
    </ligand>
</feature>
<feature type="binding site" evidence="1">
    <location>
        <position position="170"/>
    </location>
    <ligand>
        <name>phosphoenolpyruvate</name>
        <dbReference type="ChEBI" id="CHEBI:58702"/>
    </ligand>
</feature>
<feature type="binding site" evidence="1">
    <location>
        <position position="316"/>
    </location>
    <ligand>
        <name>3-phosphoshikimate</name>
        <dbReference type="ChEBI" id="CHEBI:145989"/>
    </ligand>
</feature>
<feature type="binding site" evidence="1">
    <location>
        <position position="343"/>
    </location>
    <ligand>
        <name>3-phosphoshikimate</name>
        <dbReference type="ChEBI" id="CHEBI:145989"/>
    </ligand>
</feature>
<feature type="binding site" evidence="1">
    <location>
        <position position="347"/>
    </location>
    <ligand>
        <name>phosphoenolpyruvate</name>
        <dbReference type="ChEBI" id="CHEBI:58702"/>
    </ligand>
</feature>
<feature type="binding site" evidence="1">
    <location>
        <position position="389"/>
    </location>
    <ligand>
        <name>phosphoenolpyruvate</name>
        <dbReference type="ChEBI" id="CHEBI:58702"/>
    </ligand>
</feature>
<sequence>MKERTIQPVNNGLNGNITIPGDKSISHRAVMFGAIAEGKTTIKGFLPGADCLSTISCFKEMGVDIVQNGDEVTVVGKGLEGLQEPKAVLDVGNSGTTIRLMSGILANTPFFSCVQGDASIAKRPMKRVTNPLKQMGANIDGREEGTFTPLTIRGGDLKAIEYTSPVASAQVKSAILLAGLRAEGVTAVTEPHISRDHTERMLEAFGVKVTREGKTVKLAGGQKLTATDVQVPGDVSSAAFFLVAGAIIPNSKLVLQNVGMNPTRTGIIDVLEKMGATFTVEPINEGASEPAANITIETSSLKGIEIGGDIIPRLIDEIPVIALAATQAEGITVIKDAHELKVKETNRIDTVVAELTKLGARIEATDDGMIIYGKSALKGNTVNSYGDHRIGMMLAIAGCIAKGKTTIEDAEAVGVSYPTFFEELQKLAK</sequence>
<reference key="1">
    <citation type="journal article" date="2004" name="Nucleic Acids Res.">
        <title>The genome sequence of Bacillus cereus ATCC 10987 reveals metabolic adaptations and a large plasmid related to Bacillus anthracis pXO1.</title>
        <authorList>
            <person name="Rasko D.A."/>
            <person name="Ravel J."/>
            <person name="Oekstad O.A."/>
            <person name="Helgason E."/>
            <person name="Cer R.Z."/>
            <person name="Jiang L."/>
            <person name="Shores K.A."/>
            <person name="Fouts D.E."/>
            <person name="Tourasse N.J."/>
            <person name="Angiuoli S.V."/>
            <person name="Kolonay J.F."/>
            <person name="Nelson W.C."/>
            <person name="Kolstoe A.-B."/>
            <person name="Fraser C.M."/>
            <person name="Read T.D."/>
        </authorList>
    </citation>
    <scope>NUCLEOTIDE SEQUENCE [LARGE SCALE GENOMIC DNA]</scope>
    <source>
        <strain>ATCC 10987 / NRS 248</strain>
    </source>
</reference>
<gene>
    <name evidence="1" type="primary">aroA</name>
    <name type="ordered locus">BCE_2994</name>
</gene>
<accession>Q736A7</accession>
<protein>
    <recommendedName>
        <fullName evidence="1">3-phosphoshikimate 1-carboxyvinyltransferase</fullName>
        <ecNumber evidence="1">2.5.1.19</ecNumber>
    </recommendedName>
    <alternativeName>
        <fullName evidence="1">5-enolpyruvylshikimate-3-phosphate synthase</fullName>
        <shortName evidence="1">EPSP synthase</shortName>
        <shortName evidence="1">EPSPS</shortName>
    </alternativeName>
</protein>
<comment type="function">
    <text evidence="1">Catalyzes the transfer of the enolpyruvyl moiety of phosphoenolpyruvate (PEP) to the 5-hydroxyl of shikimate-3-phosphate (S3P) to produce enolpyruvyl shikimate-3-phosphate and inorganic phosphate.</text>
</comment>
<comment type="catalytic activity">
    <reaction evidence="1">
        <text>3-phosphoshikimate + phosphoenolpyruvate = 5-O-(1-carboxyvinyl)-3-phosphoshikimate + phosphate</text>
        <dbReference type="Rhea" id="RHEA:21256"/>
        <dbReference type="ChEBI" id="CHEBI:43474"/>
        <dbReference type="ChEBI" id="CHEBI:57701"/>
        <dbReference type="ChEBI" id="CHEBI:58702"/>
        <dbReference type="ChEBI" id="CHEBI:145989"/>
        <dbReference type="EC" id="2.5.1.19"/>
    </reaction>
    <physiologicalReaction direction="left-to-right" evidence="1">
        <dbReference type="Rhea" id="RHEA:21257"/>
    </physiologicalReaction>
</comment>
<comment type="pathway">
    <text evidence="1">Metabolic intermediate biosynthesis; chorismate biosynthesis; chorismate from D-erythrose 4-phosphate and phosphoenolpyruvate: step 6/7.</text>
</comment>
<comment type="subunit">
    <text evidence="1">Monomer.</text>
</comment>
<comment type="subcellular location">
    <subcellularLocation>
        <location evidence="1">Cytoplasm</location>
    </subcellularLocation>
</comment>
<comment type="similarity">
    <text evidence="1">Belongs to the EPSP synthase family.</text>
</comment>
<dbReference type="EC" id="2.5.1.19" evidence="1"/>
<dbReference type="EMBL" id="AE017194">
    <property type="protein sequence ID" value="AAS41905.1"/>
    <property type="molecule type" value="Genomic_DNA"/>
</dbReference>
<dbReference type="SMR" id="Q736A7"/>
<dbReference type="KEGG" id="bca:BCE_2994"/>
<dbReference type="HOGENOM" id="CLU_024321_0_1_9"/>
<dbReference type="UniPathway" id="UPA00053">
    <property type="reaction ID" value="UER00089"/>
</dbReference>
<dbReference type="Proteomes" id="UP000002527">
    <property type="component" value="Chromosome"/>
</dbReference>
<dbReference type="GO" id="GO:0005737">
    <property type="term" value="C:cytoplasm"/>
    <property type="evidence" value="ECO:0007669"/>
    <property type="project" value="UniProtKB-SubCell"/>
</dbReference>
<dbReference type="GO" id="GO:0003866">
    <property type="term" value="F:3-phosphoshikimate 1-carboxyvinyltransferase activity"/>
    <property type="evidence" value="ECO:0007669"/>
    <property type="project" value="UniProtKB-UniRule"/>
</dbReference>
<dbReference type="GO" id="GO:0008652">
    <property type="term" value="P:amino acid biosynthetic process"/>
    <property type="evidence" value="ECO:0007669"/>
    <property type="project" value="UniProtKB-KW"/>
</dbReference>
<dbReference type="GO" id="GO:0009073">
    <property type="term" value="P:aromatic amino acid family biosynthetic process"/>
    <property type="evidence" value="ECO:0007669"/>
    <property type="project" value="UniProtKB-KW"/>
</dbReference>
<dbReference type="GO" id="GO:0009423">
    <property type="term" value="P:chorismate biosynthetic process"/>
    <property type="evidence" value="ECO:0007669"/>
    <property type="project" value="UniProtKB-UniRule"/>
</dbReference>
<dbReference type="CDD" id="cd01556">
    <property type="entry name" value="EPSP_synthase"/>
    <property type="match status" value="1"/>
</dbReference>
<dbReference type="FunFam" id="3.65.10.10:FF:000005">
    <property type="entry name" value="3-phosphoshikimate 1-carboxyvinyltransferase"/>
    <property type="match status" value="1"/>
</dbReference>
<dbReference type="Gene3D" id="3.65.10.10">
    <property type="entry name" value="Enolpyruvate transferase domain"/>
    <property type="match status" value="2"/>
</dbReference>
<dbReference type="HAMAP" id="MF_00210">
    <property type="entry name" value="EPSP_synth"/>
    <property type="match status" value="1"/>
</dbReference>
<dbReference type="InterPro" id="IPR001986">
    <property type="entry name" value="Enolpyruvate_Tfrase_dom"/>
</dbReference>
<dbReference type="InterPro" id="IPR036968">
    <property type="entry name" value="Enolpyruvate_Tfrase_sf"/>
</dbReference>
<dbReference type="InterPro" id="IPR006264">
    <property type="entry name" value="EPSP_synthase"/>
</dbReference>
<dbReference type="InterPro" id="IPR023193">
    <property type="entry name" value="EPSP_synthase_CS"/>
</dbReference>
<dbReference type="InterPro" id="IPR013792">
    <property type="entry name" value="RNA3'P_cycl/enolpyr_Trfase_a/b"/>
</dbReference>
<dbReference type="NCBIfam" id="TIGR01356">
    <property type="entry name" value="aroA"/>
    <property type="match status" value="1"/>
</dbReference>
<dbReference type="PANTHER" id="PTHR21090">
    <property type="entry name" value="AROM/DEHYDROQUINATE SYNTHASE"/>
    <property type="match status" value="1"/>
</dbReference>
<dbReference type="PANTHER" id="PTHR21090:SF5">
    <property type="entry name" value="PENTAFUNCTIONAL AROM POLYPEPTIDE"/>
    <property type="match status" value="1"/>
</dbReference>
<dbReference type="Pfam" id="PF00275">
    <property type="entry name" value="EPSP_synthase"/>
    <property type="match status" value="1"/>
</dbReference>
<dbReference type="PIRSF" id="PIRSF000505">
    <property type="entry name" value="EPSPS"/>
    <property type="match status" value="1"/>
</dbReference>
<dbReference type="SUPFAM" id="SSF55205">
    <property type="entry name" value="EPT/RTPC-like"/>
    <property type="match status" value="1"/>
</dbReference>
<dbReference type="PROSITE" id="PS00104">
    <property type="entry name" value="EPSP_SYNTHASE_1"/>
    <property type="match status" value="1"/>
</dbReference>
<dbReference type="PROSITE" id="PS00885">
    <property type="entry name" value="EPSP_SYNTHASE_2"/>
    <property type="match status" value="1"/>
</dbReference>
<keyword id="KW-0028">Amino-acid biosynthesis</keyword>
<keyword id="KW-0057">Aromatic amino acid biosynthesis</keyword>
<keyword id="KW-0963">Cytoplasm</keyword>
<keyword id="KW-0808">Transferase</keyword>
<organism>
    <name type="scientific">Bacillus cereus (strain ATCC 10987 / NRS 248)</name>
    <dbReference type="NCBI Taxonomy" id="222523"/>
    <lineage>
        <taxon>Bacteria</taxon>
        <taxon>Bacillati</taxon>
        <taxon>Bacillota</taxon>
        <taxon>Bacilli</taxon>
        <taxon>Bacillales</taxon>
        <taxon>Bacillaceae</taxon>
        <taxon>Bacillus</taxon>
        <taxon>Bacillus cereus group</taxon>
    </lineage>
</organism>
<evidence type="ECO:0000255" key="1">
    <source>
        <dbReference type="HAMAP-Rule" id="MF_00210"/>
    </source>
</evidence>
<name>AROA_BACC1</name>